<evidence type="ECO:0000255" key="1">
    <source>
        <dbReference type="HAMAP-Rule" id="MF_01050"/>
    </source>
</evidence>
<feature type="chain" id="PRO_1000136255" description="L-carnitine CoA-transferase">
    <location>
        <begin position="1"/>
        <end position="405"/>
    </location>
</feature>
<feature type="active site" description="Nucleophile" evidence="1">
    <location>
        <position position="169"/>
    </location>
</feature>
<feature type="binding site" evidence="1">
    <location>
        <position position="97"/>
    </location>
    <ligand>
        <name>CoA</name>
        <dbReference type="ChEBI" id="CHEBI:57287"/>
    </ligand>
</feature>
<feature type="binding site" evidence="1">
    <location>
        <position position="104"/>
    </location>
    <ligand>
        <name>CoA</name>
        <dbReference type="ChEBI" id="CHEBI:57287"/>
    </ligand>
</feature>
<gene>
    <name evidence="1" type="primary">caiB</name>
    <name type="ordered locus">SEN0073</name>
</gene>
<dbReference type="EC" id="2.8.3.21" evidence="1"/>
<dbReference type="EMBL" id="AM933172">
    <property type="protein sequence ID" value="CAR31662.1"/>
    <property type="molecule type" value="Genomic_DNA"/>
</dbReference>
<dbReference type="RefSeq" id="WP_001016213.1">
    <property type="nucleotide sequence ID" value="NC_011294.1"/>
</dbReference>
<dbReference type="SMR" id="B5R1R1"/>
<dbReference type="KEGG" id="set:SEN0073"/>
<dbReference type="HOGENOM" id="CLU_033975_2_0_6"/>
<dbReference type="UniPathway" id="UPA00117"/>
<dbReference type="Proteomes" id="UP000000613">
    <property type="component" value="Chromosome"/>
</dbReference>
<dbReference type="GO" id="GO:0005737">
    <property type="term" value="C:cytoplasm"/>
    <property type="evidence" value="ECO:0007669"/>
    <property type="project" value="UniProtKB-SubCell"/>
</dbReference>
<dbReference type="GO" id="GO:0008735">
    <property type="term" value="F:L-carnitine CoA-transferase activity"/>
    <property type="evidence" value="ECO:0007669"/>
    <property type="project" value="RHEA"/>
</dbReference>
<dbReference type="GO" id="GO:0009437">
    <property type="term" value="P:carnitine metabolic process"/>
    <property type="evidence" value="ECO:0007669"/>
    <property type="project" value="UniProtKB-UniRule"/>
</dbReference>
<dbReference type="FunFam" id="3.30.1540.10:FF:000001">
    <property type="entry name" value="L-carnitine CoA-transferase"/>
    <property type="match status" value="1"/>
</dbReference>
<dbReference type="Gene3D" id="3.40.50.10540">
    <property type="entry name" value="Crotonobetainyl-coa:carnitine coa-transferase, domain 1"/>
    <property type="match status" value="1"/>
</dbReference>
<dbReference type="Gene3D" id="3.30.1540.10">
    <property type="entry name" value="formyl-coa transferase, domain 3"/>
    <property type="match status" value="1"/>
</dbReference>
<dbReference type="HAMAP" id="MF_01050">
    <property type="entry name" value="CaiB"/>
    <property type="match status" value="1"/>
</dbReference>
<dbReference type="InterPro" id="IPR050509">
    <property type="entry name" value="CoA-transferase_III"/>
</dbReference>
<dbReference type="InterPro" id="IPR023452">
    <property type="entry name" value="CoA-Trfase_CaiB"/>
</dbReference>
<dbReference type="InterPro" id="IPR003673">
    <property type="entry name" value="CoA-Trfase_fam_III"/>
</dbReference>
<dbReference type="InterPro" id="IPR044855">
    <property type="entry name" value="CoA-Trfase_III_dom3_sf"/>
</dbReference>
<dbReference type="InterPro" id="IPR023606">
    <property type="entry name" value="CoA-Trfase_III_dom_1_sf"/>
</dbReference>
<dbReference type="NCBIfam" id="NF002914">
    <property type="entry name" value="PRK03525.1"/>
    <property type="match status" value="1"/>
</dbReference>
<dbReference type="PANTHER" id="PTHR48228:SF6">
    <property type="entry name" value="L-CARNITINE COA-TRANSFERASE"/>
    <property type="match status" value="1"/>
</dbReference>
<dbReference type="PANTHER" id="PTHR48228">
    <property type="entry name" value="SUCCINYL-COA--D-CITRAMALATE COA-TRANSFERASE"/>
    <property type="match status" value="1"/>
</dbReference>
<dbReference type="Pfam" id="PF02515">
    <property type="entry name" value="CoA_transf_3"/>
    <property type="match status" value="1"/>
</dbReference>
<dbReference type="SUPFAM" id="SSF89796">
    <property type="entry name" value="CoA-transferase family III (CaiB/BaiF)"/>
    <property type="match status" value="1"/>
</dbReference>
<sequence length="405" mass="44910">MNHLPMPTFGPLAGVRVVFSGIEIAGPFAGQMFAEWGAEVIWIENVAWADTIRVQPNYPQLSRRNLHALSLNIFKDEGREAFLKLMETTDIFIEASKGPAFARRGITDEVLWEHNPKLVIAHLSGFGQYGTEEYTNLPAYNTIAQAFSGYLIQNGDVDQPMPAFPYTADYFSGMTATTAALAALHKVRETGKGESIDIAMYEVMLRMGQYFMMDYFNGGEICPRMTKGKDPYYAGCGLYKCADGYIVMELVGITQINECFKDIGLAHILGTPEVPEGTQLIHRVECPYGPLVEEKLDAWLATHTIAEVQARFAELNIACAKVLTIPELEGNPQYVARESITQWQTMDGRTCKGPNIMPKFKNNPGKIWRGMPSHGMDTAAILKNIGYSEADIKELVGKGLAKVED</sequence>
<organism>
    <name type="scientific">Salmonella enteritidis PT4 (strain P125109)</name>
    <dbReference type="NCBI Taxonomy" id="550537"/>
    <lineage>
        <taxon>Bacteria</taxon>
        <taxon>Pseudomonadati</taxon>
        <taxon>Pseudomonadota</taxon>
        <taxon>Gammaproteobacteria</taxon>
        <taxon>Enterobacterales</taxon>
        <taxon>Enterobacteriaceae</taxon>
        <taxon>Salmonella</taxon>
    </lineage>
</organism>
<name>CAIB_SALEP</name>
<comment type="function">
    <text evidence="1">Catalyzes the reversible transfer of the CoA moiety from gamma-butyrobetainyl-CoA to L-carnitine to generate L-carnitinyl-CoA and gamma-butyrobetaine. Is also able to catalyze the reversible transfer of the CoA moiety from gamma-butyrobetainyl-CoA or L-carnitinyl-CoA to crotonobetaine to generate crotonobetainyl-CoA.</text>
</comment>
<comment type="catalytic activity">
    <reaction evidence="1">
        <text>crotonobetainyl-CoA + (R)-carnitine = crotonobetaine + (R)-carnitinyl-CoA</text>
        <dbReference type="Rhea" id="RHEA:28526"/>
        <dbReference type="ChEBI" id="CHEBI:16347"/>
        <dbReference type="ChEBI" id="CHEBI:17237"/>
        <dbReference type="ChEBI" id="CHEBI:60932"/>
        <dbReference type="ChEBI" id="CHEBI:60933"/>
        <dbReference type="EC" id="2.8.3.21"/>
    </reaction>
</comment>
<comment type="catalytic activity">
    <reaction evidence="1">
        <text>4-(trimethylamino)butanoyl-CoA + (R)-carnitine = (R)-carnitinyl-CoA + 4-(trimethylamino)butanoate</text>
        <dbReference type="Rhea" id="RHEA:28418"/>
        <dbReference type="ChEBI" id="CHEBI:16244"/>
        <dbReference type="ChEBI" id="CHEBI:16347"/>
        <dbReference type="ChEBI" id="CHEBI:60932"/>
        <dbReference type="ChEBI" id="CHEBI:61513"/>
        <dbReference type="EC" id="2.8.3.21"/>
    </reaction>
</comment>
<comment type="pathway">
    <text evidence="1">Amine and polyamine metabolism; carnitine metabolism.</text>
</comment>
<comment type="subunit">
    <text evidence="1">Homodimer.</text>
</comment>
<comment type="subcellular location">
    <subcellularLocation>
        <location evidence="1">Cytoplasm</location>
    </subcellularLocation>
</comment>
<comment type="similarity">
    <text evidence="1">Belongs to the CoA-transferase III family. CaiB subfamily.</text>
</comment>
<protein>
    <recommendedName>
        <fullName evidence="1">L-carnitine CoA-transferase</fullName>
        <ecNumber evidence="1">2.8.3.21</ecNumber>
    </recommendedName>
    <alternativeName>
        <fullName evidence="1">Crotonobetainyl-CoA:carnitine CoA-transferase</fullName>
    </alternativeName>
</protein>
<proteinExistence type="inferred from homology"/>
<keyword id="KW-0963">Cytoplasm</keyword>
<keyword id="KW-0808">Transferase</keyword>
<accession>B5R1R1</accession>
<reference key="1">
    <citation type="journal article" date="2008" name="Genome Res.">
        <title>Comparative genome analysis of Salmonella enteritidis PT4 and Salmonella gallinarum 287/91 provides insights into evolutionary and host adaptation pathways.</title>
        <authorList>
            <person name="Thomson N.R."/>
            <person name="Clayton D.J."/>
            <person name="Windhorst D."/>
            <person name="Vernikos G."/>
            <person name="Davidson S."/>
            <person name="Churcher C."/>
            <person name="Quail M.A."/>
            <person name="Stevens M."/>
            <person name="Jones M.A."/>
            <person name="Watson M."/>
            <person name="Barron A."/>
            <person name="Layton A."/>
            <person name="Pickard D."/>
            <person name="Kingsley R.A."/>
            <person name="Bignell A."/>
            <person name="Clark L."/>
            <person name="Harris B."/>
            <person name="Ormond D."/>
            <person name="Abdellah Z."/>
            <person name="Brooks K."/>
            <person name="Cherevach I."/>
            <person name="Chillingworth T."/>
            <person name="Woodward J."/>
            <person name="Norberczak H."/>
            <person name="Lord A."/>
            <person name="Arrowsmith C."/>
            <person name="Jagels K."/>
            <person name="Moule S."/>
            <person name="Mungall K."/>
            <person name="Saunders M."/>
            <person name="Whitehead S."/>
            <person name="Chabalgoity J.A."/>
            <person name="Maskell D."/>
            <person name="Humphreys T."/>
            <person name="Roberts M."/>
            <person name="Barrow P.A."/>
            <person name="Dougan G."/>
            <person name="Parkhill J."/>
        </authorList>
    </citation>
    <scope>NUCLEOTIDE SEQUENCE [LARGE SCALE GENOMIC DNA]</scope>
    <source>
        <strain>P125109</strain>
    </source>
</reference>